<dbReference type="EC" id="2.5.1.75" evidence="1"/>
<dbReference type="EMBL" id="CP000859">
    <property type="protein sequence ID" value="ABW67568.1"/>
    <property type="molecule type" value="Genomic_DNA"/>
</dbReference>
<dbReference type="RefSeq" id="WP_012175184.1">
    <property type="nucleotide sequence ID" value="NC_009943.1"/>
</dbReference>
<dbReference type="SMR" id="A9A0U3"/>
<dbReference type="STRING" id="96561.Dole_1764"/>
<dbReference type="KEGG" id="dol:Dole_1764"/>
<dbReference type="eggNOG" id="COG0324">
    <property type="taxonomic scope" value="Bacteria"/>
</dbReference>
<dbReference type="HOGENOM" id="CLU_032616_0_1_7"/>
<dbReference type="OrthoDB" id="9776390at2"/>
<dbReference type="Proteomes" id="UP000008561">
    <property type="component" value="Chromosome"/>
</dbReference>
<dbReference type="GO" id="GO:0005524">
    <property type="term" value="F:ATP binding"/>
    <property type="evidence" value="ECO:0007669"/>
    <property type="project" value="UniProtKB-UniRule"/>
</dbReference>
<dbReference type="GO" id="GO:0052381">
    <property type="term" value="F:tRNA dimethylallyltransferase activity"/>
    <property type="evidence" value="ECO:0007669"/>
    <property type="project" value="UniProtKB-UniRule"/>
</dbReference>
<dbReference type="GO" id="GO:0006400">
    <property type="term" value="P:tRNA modification"/>
    <property type="evidence" value="ECO:0007669"/>
    <property type="project" value="TreeGrafter"/>
</dbReference>
<dbReference type="FunFam" id="1.10.20.140:FF:000001">
    <property type="entry name" value="tRNA dimethylallyltransferase"/>
    <property type="match status" value="1"/>
</dbReference>
<dbReference type="Gene3D" id="1.10.20.140">
    <property type="match status" value="1"/>
</dbReference>
<dbReference type="Gene3D" id="3.40.50.300">
    <property type="entry name" value="P-loop containing nucleotide triphosphate hydrolases"/>
    <property type="match status" value="1"/>
</dbReference>
<dbReference type="HAMAP" id="MF_00185">
    <property type="entry name" value="IPP_trans"/>
    <property type="match status" value="1"/>
</dbReference>
<dbReference type="InterPro" id="IPR039657">
    <property type="entry name" value="Dimethylallyltransferase"/>
</dbReference>
<dbReference type="InterPro" id="IPR018022">
    <property type="entry name" value="IPT"/>
</dbReference>
<dbReference type="InterPro" id="IPR027417">
    <property type="entry name" value="P-loop_NTPase"/>
</dbReference>
<dbReference type="NCBIfam" id="TIGR00174">
    <property type="entry name" value="miaA"/>
    <property type="match status" value="1"/>
</dbReference>
<dbReference type="PANTHER" id="PTHR11088">
    <property type="entry name" value="TRNA DIMETHYLALLYLTRANSFERASE"/>
    <property type="match status" value="1"/>
</dbReference>
<dbReference type="PANTHER" id="PTHR11088:SF60">
    <property type="entry name" value="TRNA DIMETHYLALLYLTRANSFERASE"/>
    <property type="match status" value="1"/>
</dbReference>
<dbReference type="Pfam" id="PF01715">
    <property type="entry name" value="IPPT"/>
    <property type="match status" value="1"/>
</dbReference>
<dbReference type="SUPFAM" id="SSF52540">
    <property type="entry name" value="P-loop containing nucleoside triphosphate hydrolases"/>
    <property type="match status" value="2"/>
</dbReference>
<sequence>MTGGCPTRPRVIVLCGPTGVGKTRLAIALAEEFGGQIVGADSMQVYRYMDIGTAKPTPAEQARVPHHMIDVADPDESFSAGRYARMARPILMDLNEQGVLPVLAGGTGLYIKACLHGLFRKHSADKAVLERLEREANDQGSAVLHQRLAVCDPETAERIHPNDRFRIVRALEVFESTGLPASGHRQAHGFAEDPFDALKICLHLDRKTLYGRINHRVDLMLADGFEKEVAGLLARGYAPELKAMQSIGYRHMTAWLAGGISRETAVENMKKDTRRYAKRQETWFKADPDMVWVDQKEGLEKVPFLVKRFLRYGK</sequence>
<organism>
    <name type="scientific">Desulfosudis oleivorans (strain DSM 6200 / JCM 39069 / Hxd3)</name>
    <name type="common">Desulfococcus oleovorans</name>
    <dbReference type="NCBI Taxonomy" id="96561"/>
    <lineage>
        <taxon>Bacteria</taxon>
        <taxon>Pseudomonadati</taxon>
        <taxon>Thermodesulfobacteriota</taxon>
        <taxon>Desulfobacteria</taxon>
        <taxon>Desulfobacterales</taxon>
        <taxon>Desulfosudaceae</taxon>
        <taxon>Desulfosudis</taxon>
    </lineage>
</organism>
<protein>
    <recommendedName>
        <fullName evidence="1">tRNA dimethylallyltransferase</fullName>
        <ecNumber evidence="1">2.5.1.75</ecNumber>
    </recommendedName>
    <alternativeName>
        <fullName evidence="1">Dimethylallyl diphosphate:tRNA dimethylallyltransferase</fullName>
        <shortName evidence="1">DMAPP:tRNA dimethylallyltransferase</shortName>
        <shortName evidence="1">DMATase</shortName>
    </alternativeName>
    <alternativeName>
        <fullName evidence="1">Isopentenyl-diphosphate:tRNA isopentenyltransferase</fullName>
        <shortName evidence="1">IPP transferase</shortName>
        <shortName evidence="1">IPPT</shortName>
        <shortName evidence="1">IPTase</shortName>
    </alternativeName>
</protein>
<keyword id="KW-0067">ATP-binding</keyword>
<keyword id="KW-0460">Magnesium</keyword>
<keyword id="KW-0547">Nucleotide-binding</keyword>
<keyword id="KW-1185">Reference proteome</keyword>
<keyword id="KW-0808">Transferase</keyword>
<keyword id="KW-0819">tRNA processing</keyword>
<evidence type="ECO:0000255" key="1">
    <source>
        <dbReference type="HAMAP-Rule" id="MF_00185"/>
    </source>
</evidence>
<reference key="1">
    <citation type="submission" date="2007-10" db="EMBL/GenBank/DDBJ databases">
        <title>Complete sequence of Desulfococcus oleovorans Hxd3.</title>
        <authorList>
            <consortium name="US DOE Joint Genome Institute"/>
            <person name="Copeland A."/>
            <person name="Lucas S."/>
            <person name="Lapidus A."/>
            <person name="Barry K."/>
            <person name="Glavina del Rio T."/>
            <person name="Dalin E."/>
            <person name="Tice H."/>
            <person name="Pitluck S."/>
            <person name="Kiss H."/>
            <person name="Brettin T."/>
            <person name="Bruce D."/>
            <person name="Detter J.C."/>
            <person name="Han C."/>
            <person name="Schmutz J."/>
            <person name="Larimer F."/>
            <person name="Land M."/>
            <person name="Hauser L."/>
            <person name="Kyrpides N."/>
            <person name="Kim E."/>
            <person name="Wawrik B."/>
            <person name="Richardson P."/>
        </authorList>
    </citation>
    <scope>NUCLEOTIDE SEQUENCE [LARGE SCALE GENOMIC DNA]</scope>
    <source>
        <strain>DSM 6200 / JCM 39069 / Hxd3</strain>
    </source>
</reference>
<gene>
    <name evidence="1" type="primary">miaA</name>
    <name type="ordered locus">Dole_1764</name>
</gene>
<comment type="function">
    <text evidence="1">Catalyzes the transfer of a dimethylallyl group onto the adenine at position 37 in tRNAs that read codons beginning with uridine, leading to the formation of N6-(dimethylallyl)adenosine (i(6)A).</text>
</comment>
<comment type="catalytic activity">
    <reaction evidence="1">
        <text>adenosine(37) in tRNA + dimethylallyl diphosphate = N(6)-dimethylallyladenosine(37) in tRNA + diphosphate</text>
        <dbReference type="Rhea" id="RHEA:26482"/>
        <dbReference type="Rhea" id="RHEA-COMP:10162"/>
        <dbReference type="Rhea" id="RHEA-COMP:10375"/>
        <dbReference type="ChEBI" id="CHEBI:33019"/>
        <dbReference type="ChEBI" id="CHEBI:57623"/>
        <dbReference type="ChEBI" id="CHEBI:74411"/>
        <dbReference type="ChEBI" id="CHEBI:74415"/>
        <dbReference type="EC" id="2.5.1.75"/>
    </reaction>
</comment>
<comment type="cofactor">
    <cofactor evidence="1">
        <name>Mg(2+)</name>
        <dbReference type="ChEBI" id="CHEBI:18420"/>
    </cofactor>
</comment>
<comment type="subunit">
    <text evidence="1">Monomer.</text>
</comment>
<comment type="similarity">
    <text evidence="1">Belongs to the IPP transferase family.</text>
</comment>
<proteinExistence type="inferred from homology"/>
<feature type="chain" id="PRO_1000098659" description="tRNA dimethylallyltransferase">
    <location>
        <begin position="1"/>
        <end position="314"/>
    </location>
</feature>
<feature type="region of interest" description="Interaction with substrate tRNA" evidence="1">
    <location>
        <begin position="41"/>
        <end position="44"/>
    </location>
</feature>
<feature type="binding site" evidence="1">
    <location>
        <begin position="16"/>
        <end position="23"/>
    </location>
    <ligand>
        <name>ATP</name>
        <dbReference type="ChEBI" id="CHEBI:30616"/>
    </ligand>
</feature>
<feature type="binding site" evidence="1">
    <location>
        <begin position="18"/>
        <end position="23"/>
    </location>
    <ligand>
        <name>substrate</name>
    </ligand>
</feature>
<feature type="site" description="Interaction with substrate tRNA" evidence="1">
    <location>
        <position position="107"/>
    </location>
</feature>
<name>MIAA_DESOH</name>
<accession>A9A0U3</accession>